<reference key="1">
    <citation type="submission" date="2007-04" db="EMBL/GenBank/DDBJ databases">
        <title>Complete sequence of chromosome of Mycobacterium gilvum PYR-GCK.</title>
        <authorList>
            <consortium name="US DOE Joint Genome Institute"/>
            <person name="Copeland A."/>
            <person name="Lucas S."/>
            <person name="Lapidus A."/>
            <person name="Barry K."/>
            <person name="Detter J.C."/>
            <person name="Glavina del Rio T."/>
            <person name="Hammon N."/>
            <person name="Israni S."/>
            <person name="Dalin E."/>
            <person name="Tice H."/>
            <person name="Pitluck S."/>
            <person name="Chain P."/>
            <person name="Malfatti S."/>
            <person name="Shin M."/>
            <person name="Vergez L."/>
            <person name="Schmutz J."/>
            <person name="Larimer F."/>
            <person name="Land M."/>
            <person name="Hauser L."/>
            <person name="Kyrpides N."/>
            <person name="Mikhailova N."/>
            <person name="Miller C."/>
            <person name="Richardson P."/>
        </authorList>
    </citation>
    <scope>NUCLEOTIDE SEQUENCE [LARGE SCALE GENOMIC DNA]</scope>
    <source>
        <strain>PYR-GCK</strain>
    </source>
</reference>
<dbReference type="EC" id="5.99.-.-" evidence="1"/>
<dbReference type="EMBL" id="CP000656">
    <property type="protein sequence ID" value="ABP42796.1"/>
    <property type="molecule type" value="Genomic_DNA"/>
</dbReference>
<dbReference type="SMR" id="A4T0W5"/>
<dbReference type="STRING" id="350054.Mflv_0302"/>
<dbReference type="KEGG" id="mgi:Mflv_0302"/>
<dbReference type="eggNOG" id="COG4044">
    <property type="taxonomic scope" value="Bacteria"/>
</dbReference>
<dbReference type="HOGENOM" id="CLU_085483_0_0_11"/>
<dbReference type="OrthoDB" id="4804006at2"/>
<dbReference type="GO" id="GO:0020037">
    <property type="term" value="F:heme binding"/>
    <property type="evidence" value="ECO:0007669"/>
    <property type="project" value="UniProtKB-UniRule"/>
</dbReference>
<dbReference type="GO" id="GO:0046872">
    <property type="term" value="F:metal ion binding"/>
    <property type="evidence" value="ECO:0007669"/>
    <property type="project" value="UniProtKB-KW"/>
</dbReference>
<dbReference type="GO" id="GO:0062213">
    <property type="term" value="F:peroxynitrite isomerase activity"/>
    <property type="evidence" value="ECO:0007669"/>
    <property type="project" value="UniProtKB-UniRule"/>
</dbReference>
<dbReference type="CDD" id="cd07828">
    <property type="entry name" value="lipocalin_heme-bd-THAP4-like"/>
    <property type="match status" value="1"/>
</dbReference>
<dbReference type="Gene3D" id="2.40.128.20">
    <property type="match status" value="1"/>
</dbReference>
<dbReference type="HAMAP" id="MF_01297">
    <property type="entry name" value="nitrobindin"/>
    <property type="match status" value="1"/>
</dbReference>
<dbReference type="InterPro" id="IPR012674">
    <property type="entry name" value="Calycin"/>
</dbReference>
<dbReference type="InterPro" id="IPR022939">
    <property type="entry name" value="Nb(III)_bact/plant"/>
</dbReference>
<dbReference type="InterPro" id="IPR045165">
    <property type="entry name" value="Nitrobindin"/>
</dbReference>
<dbReference type="InterPro" id="IPR054873">
    <property type="entry name" value="PeroxynitIsom"/>
</dbReference>
<dbReference type="InterPro" id="IPR014878">
    <property type="entry name" value="THAP4-like_heme-bd"/>
</dbReference>
<dbReference type="NCBIfam" id="NF045819">
    <property type="entry name" value="PeroxynitIsom"/>
    <property type="match status" value="1"/>
</dbReference>
<dbReference type="PANTHER" id="PTHR15854:SF4">
    <property type="entry name" value="PEROXYNITRITE ISOMERASE THAP4"/>
    <property type="match status" value="1"/>
</dbReference>
<dbReference type="PANTHER" id="PTHR15854">
    <property type="entry name" value="THAP4 PROTEIN"/>
    <property type="match status" value="1"/>
</dbReference>
<dbReference type="Pfam" id="PF08768">
    <property type="entry name" value="THAP4_heme-bd"/>
    <property type="match status" value="1"/>
</dbReference>
<dbReference type="SUPFAM" id="SSF50814">
    <property type="entry name" value="Lipocalins"/>
    <property type="match status" value="1"/>
</dbReference>
<gene>
    <name type="ordered locus">Mflv_0302</name>
</gene>
<sequence>MVAPVPLHPDVVALAPLLGVWVGEGTGEYPTVPSFAYTEEITFGHVGKPFLSYVQRTRAADDGRPLHSETGYVRSPAPHCVEWILAHPTGITEILEGILERIVTGEGDTLRIDVESTAVGRSASAKEVSAVGRTIELAGDTLTYSVRMAAVGMPLQHHLSAVLHRA</sequence>
<comment type="function">
    <text evidence="1">Heme-binding protein able to scavenge peroxynitrite and to protect free L-tyrosine against peroxynitrite-mediated nitration, by acting as a peroxynitrite isomerase that converts peroxynitrite to nitrate. Therefore, this protein likely plays a role in peroxynitrite sensing and in the detoxification of reactive nitrogen and oxygen species (RNS and ROS, respectively). Is able to bind nitric oxide (NO) in vitro, but may act as a sensor of peroxynitrite levels in vivo.</text>
</comment>
<comment type="catalytic activity">
    <reaction evidence="1">
        <text>peroxynitrite = nitrate</text>
        <dbReference type="Rhea" id="RHEA:63116"/>
        <dbReference type="ChEBI" id="CHEBI:17632"/>
        <dbReference type="ChEBI" id="CHEBI:25941"/>
    </reaction>
    <physiologicalReaction direction="left-to-right" evidence="1">
        <dbReference type="Rhea" id="RHEA:63117"/>
    </physiologicalReaction>
</comment>
<comment type="cofactor">
    <cofactor evidence="1">
        <name>heme b</name>
        <dbReference type="ChEBI" id="CHEBI:60344"/>
    </cofactor>
    <text evidence="1">Binds 1 heme b group per subunit, that coordinates a highly solvent-exposed Fe(III) atom.</text>
</comment>
<comment type="pathway">
    <text evidence="1">Nitrogen metabolism.</text>
</comment>
<comment type="subunit">
    <text evidence="1">Homodimer.</text>
</comment>
<comment type="domain">
    <text evidence="1">Forms a 10-stranded antiparallel beta-barrel structure able to accommodate a hydrophobic ligand in its interior. In fact, this fold hosts the heme group, which is located in a wide surface cleft.</text>
</comment>
<comment type="similarity">
    <text evidence="1">Belongs to the nitrobindin family.</text>
</comment>
<proteinExistence type="inferred from homology"/>
<feature type="chain" id="PRO_0000356918" description="Peroxynitrite isomerase 1">
    <location>
        <begin position="1"/>
        <end position="166"/>
    </location>
</feature>
<feature type="short sequence motif" description="GXWXGXG" evidence="1">
    <location>
        <begin position="19"/>
        <end position="25"/>
    </location>
</feature>
<feature type="binding site" description="axial binding residue" evidence="1">
    <location>
        <position position="158"/>
    </location>
    <ligand>
        <name>heme b</name>
        <dbReference type="ChEBI" id="CHEBI:60344"/>
    </ligand>
    <ligandPart>
        <name>Fe</name>
        <dbReference type="ChEBI" id="CHEBI:18248"/>
    </ligandPart>
</feature>
<keyword id="KW-0349">Heme</keyword>
<keyword id="KW-0408">Iron</keyword>
<keyword id="KW-0413">Isomerase</keyword>
<keyword id="KW-0479">Metal-binding</keyword>
<protein>
    <recommendedName>
        <fullName>Peroxynitrite isomerase 1</fullName>
        <ecNumber evidence="1">5.99.-.-</ecNumber>
    </recommendedName>
    <alternativeName>
        <fullName>Ferric nitrobindin</fullName>
        <shortName>Nb(III)</shortName>
    </alternativeName>
</protein>
<evidence type="ECO:0000255" key="1">
    <source>
        <dbReference type="HAMAP-Rule" id="MF_01297"/>
    </source>
</evidence>
<organism>
    <name type="scientific">Mycolicibacterium gilvum (strain PYR-GCK)</name>
    <name type="common">Mycobacterium gilvum (strain PYR-GCK)</name>
    <dbReference type="NCBI Taxonomy" id="350054"/>
    <lineage>
        <taxon>Bacteria</taxon>
        <taxon>Bacillati</taxon>
        <taxon>Actinomycetota</taxon>
        <taxon>Actinomycetes</taxon>
        <taxon>Mycobacteriales</taxon>
        <taxon>Mycobacteriaceae</taxon>
        <taxon>Mycolicibacterium</taxon>
    </lineage>
</organism>
<name>NB1_MYCGI</name>
<accession>A4T0W5</accession>